<gene>
    <name evidence="1" type="primary">glgA</name>
    <name type="ordered locus">A2cp1_0153</name>
</gene>
<evidence type="ECO:0000255" key="1">
    <source>
        <dbReference type="HAMAP-Rule" id="MF_00484"/>
    </source>
</evidence>
<keyword id="KW-0320">Glycogen biosynthesis</keyword>
<keyword id="KW-0328">Glycosyltransferase</keyword>
<keyword id="KW-0808">Transferase</keyword>
<sequence>MQILFVASEVGPWSKTGGLGDVAGALPQALAERGNEVAVVTPRHGSIDPHAAGLQPVRTALHVRGEPVALWVKRGPAPVYFVEHPHLFGSRRGLYGEGGRDHGDNAERFAFLTRAALALPAALGLRPRILHLNDWQCGLGPWLLRHEHARDPALAGARTVFTIHNLAYQGLFPKQVLPALGLPWEVFRWEAMEFFDQLSFMKAGLAFADALTTVSPTYAREILTPEGGASLDALLRHRARDLHGILNGIDVHAWDPARDPHLPAHFGAGDLTGKAACKAALQREVGLPVRPEVPVAGLVTRLAEQKGIDLVAAALPALLARDVQVVLLGSGDAAYEQAFARAAREHPDRVAARIGFDEGLAHRIEAGADLFLMPSRFEPCGLNQMYSLRYGTVPVVRAVGGLADTVEDFDGFARGTGFRFSEYTPQALLTATRRALDVFRDRRAWRGLVERGMAEDNSWERSAARYEALYRTLAPGR</sequence>
<name>GLGA_ANAD2</name>
<dbReference type="EC" id="2.4.1.21" evidence="1"/>
<dbReference type="EMBL" id="CP001359">
    <property type="protein sequence ID" value="ACL63512.1"/>
    <property type="molecule type" value="Genomic_DNA"/>
</dbReference>
<dbReference type="RefSeq" id="WP_012631591.1">
    <property type="nucleotide sequence ID" value="NC_011891.1"/>
</dbReference>
<dbReference type="SMR" id="B8J8R4"/>
<dbReference type="CAZy" id="GT5">
    <property type="family name" value="Glycosyltransferase Family 5"/>
</dbReference>
<dbReference type="KEGG" id="acp:A2cp1_0153"/>
<dbReference type="HOGENOM" id="CLU_009583_18_2_7"/>
<dbReference type="UniPathway" id="UPA00164"/>
<dbReference type="Proteomes" id="UP000007089">
    <property type="component" value="Chromosome"/>
</dbReference>
<dbReference type="GO" id="GO:0005829">
    <property type="term" value="C:cytosol"/>
    <property type="evidence" value="ECO:0007669"/>
    <property type="project" value="TreeGrafter"/>
</dbReference>
<dbReference type="GO" id="GO:0009011">
    <property type="term" value="F:alpha-1,4-glucan glucosyltransferase (ADP-glucose donor) activity"/>
    <property type="evidence" value="ECO:0007669"/>
    <property type="project" value="UniProtKB-UniRule"/>
</dbReference>
<dbReference type="GO" id="GO:0004373">
    <property type="term" value="F:alpha-1,4-glucan glucosyltransferase (UDP-glucose donor) activity"/>
    <property type="evidence" value="ECO:0007669"/>
    <property type="project" value="InterPro"/>
</dbReference>
<dbReference type="GO" id="GO:0005978">
    <property type="term" value="P:glycogen biosynthetic process"/>
    <property type="evidence" value="ECO:0007669"/>
    <property type="project" value="UniProtKB-UniRule"/>
</dbReference>
<dbReference type="CDD" id="cd03791">
    <property type="entry name" value="GT5_Glycogen_synthase_DULL1-like"/>
    <property type="match status" value="1"/>
</dbReference>
<dbReference type="Gene3D" id="3.40.50.2000">
    <property type="entry name" value="Glycogen Phosphorylase B"/>
    <property type="match status" value="2"/>
</dbReference>
<dbReference type="HAMAP" id="MF_00484">
    <property type="entry name" value="Glycogen_synth"/>
    <property type="match status" value="1"/>
</dbReference>
<dbReference type="InterPro" id="IPR001296">
    <property type="entry name" value="Glyco_trans_1"/>
</dbReference>
<dbReference type="InterPro" id="IPR011835">
    <property type="entry name" value="GS/SS"/>
</dbReference>
<dbReference type="InterPro" id="IPR013534">
    <property type="entry name" value="Starch_synth_cat_dom"/>
</dbReference>
<dbReference type="NCBIfam" id="TIGR02095">
    <property type="entry name" value="glgA"/>
    <property type="match status" value="1"/>
</dbReference>
<dbReference type="NCBIfam" id="NF001899">
    <property type="entry name" value="PRK00654.1-2"/>
    <property type="match status" value="1"/>
</dbReference>
<dbReference type="PANTHER" id="PTHR45825:SF11">
    <property type="entry name" value="ALPHA AMYLASE DOMAIN-CONTAINING PROTEIN"/>
    <property type="match status" value="1"/>
</dbReference>
<dbReference type="PANTHER" id="PTHR45825">
    <property type="entry name" value="GRANULE-BOUND STARCH SYNTHASE 1, CHLOROPLASTIC/AMYLOPLASTIC"/>
    <property type="match status" value="1"/>
</dbReference>
<dbReference type="Pfam" id="PF08323">
    <property type="entry name" value="Glyco_transf_5"/>
    <property type="match status" value="1"/>
</dbReference>
<dbReference type="Pfam" id="PF00534">
    <property type="entry name" value="Glycos_transf_1"/>
    <property type="match status" value="1"/>
</dbReference>
<dbReference type="SUPFAM" id="SSF53756">
    <property type="entry name" value="UDP-Glycosyltransferase/glycogen phosphorylase"/>
    <property type="match status" value="1"/>
</dbReference>
<proteinExistence type="inferred from homology"/>
<comment type="function">
    <text evidence="1">Synthesizes alpha-1,4-glucan chains using ADP-glucose.</text>
</comment>
<comment type="catalytic activity">
    <reaction evidence="1">
        <text>[(1-&gt;4)-alpha-D-glucosyl](n) + ADP-alpha-D-glucose = [(1-&gt;4)-alpha-D-glucosyl](n+1) + ADP + H(+)</text>
        <dbReference type="Rhea" id="RHEA:18189"/>
        <dbReference type="Rhea" id="RHEA-COMP:9584"/>
        <dbReference type="Rhea" id="RHEA-COMP:9587"/>
        <dbReference type="ChEBI" id="CHEBI:15378"/>
        <dbReference type="ChEBI" id="CHEBI:15444"/>
        <dbReference type="ChEBI" id="CHEBI:57498"/>
        <dbReference type="ChEBI" id="CHEBI:456216"/>
        <dbReference type="EC" id="2.4.1.21"/>
    </reaction>
</comment>
<comment type="pathway">
    <text evidence="1">Glycan biosynthesis; glycogen biosynthesis.</text>
</comment>
<comment type="similarity">
    <text evidence="1">Belongs to the glycosyltransferase 1 family. Bacterial/plant glycogen synthase subfamily.</text>
</comment>
<reference key="1">
    <citation type="submission" date="2009-01" db="EMBL/GenBank/DDBJ databases">
        <title>Complete sequence of Anaeromyxobacter dehalogenans 2CP-1.</title>
        <authorList>
            <person name="Lucas S."/>
            <person name="Copeland A."/>
            <person name="Lapidus A."/>
            <person name="Glavina del Rio T."/>
            <person name="Dalin E."/>
            <person name="Tice H."/>
            <person name="Bruce D."/>
            <person name="Goodwin L."/>
            <person name="Pitluck S."/>
            <person name="Saunders E."/>
            <person name="Brettin T."/>
            <person name="Detter J.C."/>
            <person name="Han C."/>
            <person name="Larimer F."/>
            <person name="Land M."/>
            <person name="Hauser L."/>
            <person name="Kyrpides N."/>
            <person name="Ovchinnikova G."/>
            <person name="Beliaev A.S."/>
            <person name="Richardson P."/>
        </authorList>
    </citation>
    <scope>NUCLEOTIDE SEQUENCE [LARGE SCALE GENOMIC DNA]</scope>
    <source>
        <strain>2CP-1 / ATCC BAA-258</strain>
    </source>
</reference>
<organism>
    <name type="scientific">Anaeromyxobacter dehalogenans (strain 2CP-1 / ATCC BAA-258)</name>
    <dbReference type="NCBI Taxonomy" id="455488"/>
    <lineage>
        <taxon>Bacteria</taxon>
        <taxon>Pseudomonadati</taxon>
        <taxon>Myxococcota</taxon>
        <taxon>Myxococcia</taxon>
        <taxon>Myxococcales</taxon>
        <taxon>Cystobacterineae</taxon>
        <taxon>Anaeromyxobacteraceae</taxon>
        <taxon>Anaeromyxobacter</taxon>
    </lineage>
</organism>
<feature type="chain" id="PRO_1000135643" description="Glycogen synthase">
    <location>
        <begin position="1"/>
        <end position="477"/>
    </location>
</feature>
<feature type="binding site" evidence="1">
    <location>
        <position position="15"/>
    </location>
    <ligand>
        <name>ADP-alpha-D-glucose</name>
        <dbReference type="ChEBI" id="CHEBI:57498"/>
    </ligand>
</feature>
<protein>
    <recommendedName>
        <fullName evidence="1">Glycogen synthase</fullName>
        <ecNumber evidence="1">2.4.1.21</ecNumber>
    </recommendedName>
    <alternativeName>
        <fullName evidence="1">Starch [bacterial glycogen] synthase</fullName>
    </alternativeName>
</protein>
<accession>B8J8R4</accession>